<accession>A1SSV3</accession>
<proteinExistence type="inferred from homology"/>
<dbReference type="EC" id="3.1.21.10" evidence="1"/>
<dbReference type="EMBL" id="CP000510">
    <property type="protein sequence ID" value="ABM02568.1"/>
    <property type="molecule type" value="Genomic_DNA"/>
</dbReference>
<dbReference type="RefSeq" id="WP_011769127.1">
    <property type="nucleotide sequence ID" value="NC_008709.1"/>
</dbReference>
<dbReference type="SMR" id="A1SSV3"/>
<dbReference type="STRING" id="357804.Ping_0716"/>
<dbReference type="KEGG" id="pin:Ping_0716"/>
<dbReference type="eggNOG" id="COG0817">
    <property type="taxonomic scope" value="Bacteria"/>
</dbReference>
<dbReference type="HOGENOM" id="CLU_091257_2_1_6"/>
<dbReference type="OrthoDB" id="9805499at2"/>
<dbReference type="Proteomes" id="UP000000639">
    <property type="component" value="Chromosome"/>
</dbReference>
<dbReference type="GO" id="GO:0005737">
    <property type="term" value="C:cytoplasm"/>
    <property type="evidence" value="ECO:0007669"/>
    <property type="project" value="UniProtKB-SubCell"/>
</dbReference>
<dbReference type="GO" id="GO:0048476">
    <property type="term" value="C:Holliday junction resolvase complex"/>
    <property type="evidence" value="ECO:0007669"/>
    <property type="project" value="UniProtKB-UniRule"/>
</dbReference>
<dbReference type="GO" id="GO:0008821">
    <property type="term" value="F:crossover junction DNA endonuclease activity"/>
    <property type="evidence" value="ECO:0007669"/>
    <property type="project" value="UniProtKB-UniRule"/>
</dbReference>
<dbReference type="GO" id="GO:0003677">
    <property type="term" value="F:DNA binding"/>
    <property type="evidence" value="ECO:0007669"/>
    <property type="project" value="UniProtKB-KW"/>
</dbReference>
<dbReference type="GO" id="GO:0000287">
    <property type="term" value="F:magnesium ion binding"/>
    <property type="evidence" value="ECO:0007669"/>
    <property type="project" value="UniProtKB-UniRule"/>
</dbReference>
<dbReference type="GO" id="GO:0006310">
    <property type="term" value="P:DNA recombination"/>
    <property type="evidence" value="ECO:0007669"/>
    <property type="project" value="UniProtKB-UniRule"/>
</dbReference>
<dbReference type="GO" id="GO:0006281">
    <property type="term" value="P:DNA repair"/>
    <property type="evidence" value="ECO:0007669"/>
    <property type="project" value="UniProtKB-UniRule"/>
</dbReference>
<dbReference type="CDD" id="cd16962">
    <property type="entry name" value="RuvC"/>
    <property type="match status" value="1"/>
</dbReference>
<dbReference type="FunFam" id="3.30.420.10:FF:000002">
    <property type="entry name" value="Crossover junction endodeoxyribonuclease RuvC"/>
    <property type="match status" value="1"/>
</dbReference>
<dbReference type="Gene3D" id="3.30.420.10">
    <property type="entry name" value="Ribonuclease H-like superfamily/Ribonuclease H"/>
    <property type="match status" value="1"/>
</dbReference>
<dbReference type="HAMAP" id="MF_00034">
    <property type="entry name" value="RuvC"/>
    <property type="match status" value="1"/>
</dbReference>
<dbReference type="InterPro" id="IPR012337">
    <property type="entry name" value="RNaseH-like_sf"/>
</dbReference>
<dbReference type="InterPro" id="IPR036397">
    <property type="entry name" value="RNaseH_sf"/>
</dbReference>
<dbReference type="InterPro" id="IPR020563">
    <property type="entry name" value="X-over_junc_endoDNase_Mg_BS"/>
</dbReference>
<dbReference type="InterPro" id="IPR002176">
    <property type="entry name" value="X-over_junc_endoDNase_RuvC"/>
</dbReference>
<dbReference type="NCBIfam" id="TIGR00228">
    <property type="entry name" value="ruvC"/>
    <property type="match status" value="1"/>
</dbReference>
<dbReference type="PANTHER" id="PTHR30194">
    <property type="entry name" value="CROSSOVER JUNCTION ENDODEOXYRIBONUCLEASE RUVC"/>
    <property type="match status" value="1"/>
</dbReference>
<dbReference type="PANTHER" id="PTHR30194:SF3">
    <property type="entry name" value="CROSSOVER JUNCTION ENDODEOXYRIBONUCLEASE RUVC"/>
    <property type="match status" value="1"/>
</dbReference>
<dbReference type="Pfam" id="PF02075">
    <property type="entry name" value="RuvC"/>
    <property type="match status" value="1"/>
</dbReference>
<dbReference type="PRINTS" id="PR00696">
    <property type="entry name" value="RSOLVASERUVC"/>
</dbReference>
<dbReference type="SUPFAM" id="SSF53098">
    <property type="entry name" value="Ribonuclease H-like"/>
    <property type="match status" value="1"/>
</dbReference>
<dbReference type="PROSITE" id="PS01321">
    <property type="entry name" value="RUVC"/>
    <property type="match status" value="1"/>
</dbReference>
<sequence>MSIILGIDPGSRITGYGVVQQKGSKCIYIASGCIRTKGDTLAPKLDMIFNGISEIIKQYQPTEFGIEQVFMAKNPDSALKLGQARGAAIVAATQADLYVCEYSARQIKQAVSGSGGATKEQVQQMVMQILNLSGRPQADAADGLAVAICHAHTAQTIVAMSGKVSKTVRGRFR</sequence>
<gene>
    <name evidence="1" type="primary">ruvC</name>
    <name type="ordered locus">Ping_0716</name>
</gene>
<feature type="chain" id="PRO_1000002806" description="Crossover junction endodeoxyribonuclease RuvC">
    <location>
        <begin position="1"/>
        <end position="173"/>
    </location>
</feature>
<feature type="active site" evidence="1">
    <location>
        <position position="8"/>
    </location>
</feature>
<feature type="active site" evidence="1">
    <location>
        <position position="67"/>
    </location>
</feature>
<feature type="active site" evidence="1">
    <location>
        <position position="139"/>
    </location>
</feature>
<feature type="binding site" evidence="1">
    <location>
        <position position="8"/>
    </location>
    <ligand>
        <name>Mg(2+)</name>
        <dbReference type="ChEBI" id="CHEBI:18420"/>
        <label>1</label>
    </ligand>
</feature>
<feature type="binding site" evidence="1">
    <location>
        <position position="67"/>
    </location>
    <ligand>
        <name>Mg(2+)</name>
        <dbReference type="ChEBI" id="CHEBI:18420"/>
        <label>2</label>
    </ligand>
</feature>
<feature type="binding site" evidence="1">
    <location>
        <position position="139"/>
    </location>
    <ligand>
        <name>Mg(2+)</name>
        <dbReference type="ChEBI" id="CHEBI:18420"/>
        <label>1</label>
    </ligand>
</feature>
<keyword id="KW-0963">Cytoplasm</keyword>
<keyword id="KW-0227">DNA damage</keyword>
<keyword id="KW-0233">DNA recombination</keyword>
<keyword id="KW-0234">DNA repair</keyword>
<keyword id="KW-0238">DNA-binding</keyword>
<keyword id="KW-0255">Endonuclease</keyword>
<keyword id="KW-0378">Hydrolase</keyword>
<keyword id="KW-0460">Magnesium</keyword>
<keyword id="KW-0479">Metal-binding</keyword>
<keyword id="KW-0540">Nuclease</keyword>
<keyword id="KW-1185">Reference proteome</keyword>
<reference key="1">
    <citation type="journal article" date="2008" name="BMC Genomics">
        <title>Genomics of an extreme psychrophile, Psychromonas ingrahamii.</title>
        <authorList>
            <person name="Riley M."/>
            <person name="Staley J.T."/>
            <person name="Danchin A."/>
            <person name="Wang T.Z."/>
            <person name="Brettin T.S."/>
            <person name="Hauser L.J."/>
            <person name="Land M.L."/>
            <person name="Thompson L.S."/>
        </authorList>
    </citation>
    <scope>NUCLEOTIDE SEQUENCE [LARGE SCALE GENOMIC DNA]</scope>
    <source>
        <strain>DSM 17664 / CCUG 51855 / 37</strain>
    </source>
</reference>
<evidence type="ECO:0000255" key="1">
    <source>
        <dbReference type="HAMAP-Rule" id="MF_00034"/>
    </source>
</evidence>
<organism>
    <name type="scientific">Psychromonas ingrahamii (strain DSM 17664 / CCUG 51855 / 37)</name>
    <dbReference type="NCBI Taxonomy" id="357804"/>
    <lineage>
        <taxon>Bacteria</taxon>
        <taxon>Pseudomonadati</taxon>
        <taxon>Pseudomonadota</taxon>
        <taxon>Gammaproteobacteria</taxon>
        <taxon>Alteromonadales</taxon>
        <taxon>Psychromonadaceae</taxon>
        <taxon>Psychromonas</taxon>
    </lineage>
</organism>
<name>RUVC_PSYIN</name>
<protein>
    <recommendedName>
        <fullName evidence="1">Crossover junction endodeoxyribonuclease RuvC</fullName>
        <ecNumber evidence="1">3.1.21.10</ecNumber>
    </recommendedName>
    <alternativeName>
        <fullName evidence="1">Holliday junction nuclease RuvC</fullName>
    </alternativeName>
    <alternativeName>
        <fullName evidence="1">Holliday junction resolvase RuvC</fullName>
    </alternativeName>
</protein>
<comment type="function">
    <text evidence="1">The RuvA-RuvB-RuvC complex processes Holliday junction (HJ) DNA during genetic recombination and DNA repair. Endonuclease that resolves HJ intermediates. Cleaves cruciform DNA by making single-stranded nicks across the HJ at symmetrical positions within the homologous arms, yielding a 5'-phosphate and a 3'-hydroxyl group; requires a central core of homology in the junction. The consensus cleavage sequence is 5'-(A/T)TT(C/G)-3'. Cleavage occurs on the 3'-side of the TT dinucleotide at the point of strand exchange. HJ branch migration catalyzed by RuvA-RuvB allows RuvC to scan DNA until it finds its consensus sequence, where it cleaves and resolves the cruciform DNA.</text>
</comment>
<comment type="catalytic activity">
    <reaction evidence="1">
        <text>Endonucleolytic cleavage at a junction such as a reciprocal single-stranded crossover between two homologous DNA duplexes (Holliday junction).</text>
        <dbReference type="EC" id="3.1.21.10"/>
    </reaction>
</comment>
<comment type="cofactor">
    <cofactor evidence="1">
        <name>Mg(2+)</name>
        <dbReference type="ChEBI" id="CHEBI:18420"/>
    </cofactor>
    <text evidence="1">Binds 2 Mg(2+) ion per subunit.</text>
</comment>
<comment type="subunit">
    <text evidence="1">Homodimer which binds Holliday junction (HJ) DNA. The HJ becomes 2-fold symmetrical on binding to RuvC with unstacked arms; it has a different conformation from HJ DNA in complex with RuvA. In the full resolvosome a probable DNA-RuvA(4)-RuvB(12)-RuvC(2) complex forms which resolves the HJ.</text>
</comment>
<comment type="subcellular location">
    <subcellularLocation>
        <location evidence="1">Cytoplasm</location>
    </subcellularLocation>
</comment>
<comment type="similarity">
    <text evidence="1">Belongs to the RuvC family.</text>
</comment>